<protein>
    <recommendedName>
        <fullName>Lysine-specific demethylase 2B</fullName>
        <ecNumber evidence="2">1.14.11.27</ecNumber>
    </recommendedName>
    <alternativeName>
        <fullName>F-box and leucine-rich repeat protein 10</fullName>
    </alternativeName>
    <alternativeName>
        <fullName>F-box protein FBL10</fullName>
    </alternativeName>
    <alternativeName>
        <fullName>F-box/LRR-repeat protein 10</fullName>
    </alternativeName>
    <alternativeName>
        <fullName>JmjC domain-containing histone demethylation protein 1B</fullName>
    </alternativeName>
    <alternativeName>
        <fullName>[Histone-H3]-lysine-36 demethylase 1B</fullName>
    </alternativeName>
</protein>
<keyword id="KW-0025">Alternative splicing</keyword>
<keyword id="KW-0156">Chromatin regulator</keyword>
<keyword id="KW-0158">Chromosome</keyword>
<keyword id="KW-0175">Coiled coil</keyword>
<keyword id="KW-0223">Dioxygenase</keyword>
<keyword id="KW-0238">DNA-binding</keyword>
<keyword id="KW-0408">Iron</keyword>
<keyword id="KW-1017">Isopeptide bond</keyword>
<keyword id="KW-0433">Leucine-rich repeat</keyword>
<keyword id="KW-0479">Metal-binding</keyword>
<keyword id="KW-0539">Nucleus</keyword>
<keyword id="KW-0560">Oxidoreductase</keyword>
<keyword id="KW-0597">Phosphoprotein</keyword>
<keyword id="KW-1185">Reference proteome</keyword>
<keyword id="KW-0677">Repeat</keyword>
<keyword id="KW-0678">Repressor</keyword>
<keyword id="KW-0694">RNA-binding</keyword>
<keyword id="KW-0699">rRNA-binding</keyword>
<keyword id="KW-0804">Transcription</keyword>
<keyword id="KW-0805">Transcription regulation</keyword>
<keyword id="KW-0832">Ubl conjugation</keyword>
<keyword id="KW-0833">Ubl conjugation pathway</keyword>
<keyword id="KW-0862">Zinc</keyword>
<keyword id="KW-0863">Zinc-finger</keyword>
<feature type="chain" id="PRO_0000119854" description="Lysine-specific demethylase 2B">
    <location>
        <begin position="1"/>
        <end position="1309"/>
    </location>
</feature>
<feature type="domain" description="JmjC" evidence="7">
    <location>
        <begin position="147"/>
        <end position="315"/>
    </location>
</feature>
<feature type="domain" description="F-box">
    <location>
        <begin position="1032"/>
        <end position="1078"/>
    </location>
</feature>
<feature type="repeat" description="LRR 1">
    <location>
        <begin position="1106"/>
        <end position="1127"/>
    </location>
</feature>
<feature type="repeat" description="LRR 2">
    <location>
        <begin position="1129"/>
        <end position="1155"/>
    </location>
</feature>
<feature type="repeat" description="LRR 3">
    <location>
        <begin position="1195"/>
        <end position="1220"/>
    </location>
</feature>
<feature type="repeat" description="LRR 4">
    <location>
        <begin position="1221"/>
        <end position="1250"/>
    </location>
</feature>
<feature type="repeat" description="LRR 5">
    <location>
        <begin position="1251"/>
        <end position="1275"/>
    </location>
</feature>
<feature type="repeat" description="LRR 6">
    <location>
        <begin position="1276"/>
        <end position="1309"/>
    </location>
</feature>
<feature type="zinc finger region" description="CXXC-type" evidence="6">
    <location>
        <begin position="579"/>
        <end position="625"/>
    </location>
</feature>
<feature type="zinc finger region" description="PHD-type" evidence="5">
    <location>
        <begin position="632"/>
        <end position="698"/>
    </location>
</feature>
<feature type="region of interest" description="Disordered" evidence="8">
    <location>
        <begin position="378"/>
        <end position="476"/>
    </location>
</feature>
<feature type="region of interest" description="Disordered" evidence="8">
    <location>
        <begin position="700"/>
        <end position="816"/>
    </location>
</feature>
<feature type="region of interest" description="Disordered" evidence="8">
    <location>
        <begin position="828"/>
        <end position="1005"/>
    </location>
</feature>
<feature type="coiled-coil region" evidence="4">
    <location>
        <begin position="916"/>
        <end position="944"/>
    </location>
</feature>
<feature type="compositionally biased region" description="Acidic residues" evidence="8">
    <location>
        <begin position="378"/>
        <end position="403"/>
    </location>
</feature>
<feature type="compositionally biased region" description="Basic and acidic residues" evidence="8">
    <location>
        <begin position="404"/>
        <end position="413"/>
    </location>
</feature>
<feature type="compositionally biased region" description="Low complexity" evidence="8">
    <location>
        <begin position="415"/>
        <end position="424"/>
    </location>
</feature>
<feature type="compositionally biased region" description="Polar residues" evidence="8">
    <location>
        <begin position="467"/>
        <end position="476"/>
    </location>
</feature>
<feature type="compositionally biased region" description="Basic and acidic residues" evidence="8">
    <location>
        <begin position="722"/>
        <end position="772"/>
    </location>
</feature>
<feature type="compositionally biased region" description="Low complexity" evidence="8">
    <location>
        <begin position="792"/>
        <end position="816"/>
    </location>
</feature>
<feature type="compositionally biased region" description="Polar residues" evidence="8">
    <location>
        <begin position="883"/>
        <end position="892"/>
    </location>
</feature>
<feature type="compositionally biased region" description="Basic residues" evidence="8">
    <location>
        <begin position="905"/>
        <end position="914"/>
    </location>
</feature>
<feature type="compositionally biased region" description="Basic and acidic residues" evidence="8">
    <location>
        <begin position="915"/>
        <end position="933"/>
    </location>
</feature>
<feature type="compositionally biased region" description="Polar residues" evidence="8">
    <location>
        <begin position="934"/>
        <end position="946"/>
    </location>
</feature>
<feature type="compositionally biased region" description="Basic and acidic residues" evidence="8">
    <location>
        <begin position="955"/>
        <end position="968"/>
    </location>
</feature>
<feature type="binding site" evidence="1">
    <location>
        <position position="208"/>
    </location>
    <ligand>
        <name>substrate</name>
    </ligand>
</feature>
<feature type="binding site" evidence="7">
    <location>
        <position position="211"/>
    </location>
    <ligand>
        <name>Fe cation</name>
        <dbReference type="ChEBI" id="CHEBI:24875"/>
        <note>catalytic</note>
    </ligand>
</feature>
<feature type="binding site" evidence="7">
    <location>
        <position position="213"/>
    </location>
    <ligand>
        <name>Fe cation</name>
        <dbReference type="ChEBI" id="CHEBI:24875"/>
        <note>catalytic</note>
    </ligand>
</feature>
<feature type="binding site" evidence="1">
    <location>
        <position position="228"/>
    </location>
    <ligand>
        <name>substrate</name>
    </ligand>
</feature>
<feature type="binding site" evidence="7">
    <location>
        <position position="283"/>
    </location>
    <ligand>
        <name>Fe cation</name>
        <dbReference type="ChEBI" id="CHEBI:24875"/>
        <note>catalytic</note>
    </ligand>
</feature>
<feature type="binding site" evidence="6">
    <location>
        <position position="586"/>
    </location>
    <ligand>
        <name>Zn(2+)</name>
        <dbReference type="ChEBI" id="CHEBI:29105"/>
        <label>1</label>
    </ligand>
</feature>
<feature type="binding site" evidence="6">
    <location>
        <position position="589"/>
    </location>
    <ligand>
        <name>Zn(2+)</name>
        <dbReference type="ChEBI" id="CHEBI:29105"/>
        <label>1</label>
    </ligand>
</feature>
<feature type="binding site" evidence="6">
    <location>
        <position position="592"/>
    </location>
    <ligand>
        <name>Zn(2+)</name>
        <dbReference type="ChEBI" id="CHEBI:29105"/>
        <label>1</label>
    </ligand>
</feature>
<feature type="binding site" evidence="6">
    <location>
        <position position="597"/>
    </location>
    <ligand>
        <name>Zn(2+)</name>
        <dbReference type="ChEBI" id="CHEBI:29105"/>
        <label>2</label>
    </ligand>
</feature>
<feature type="binding site" evidence="6">
    <location>
        <position position="600"/>
    </location>
    <ligand>
        <name>Zn(2+)</name>
        <dbReference type="ChEBI" id="CHEBI:29105"/>
        <label>2</label>
    </ligand>
</feature>
<feature type="binding site" evidence="6">
    <location>
        <position position="603"/>
    </location>
    <ligand>
        <name>Zn(2+)</name>
        <dbReference type="ChEBI" id="CHEBI:29105"/>
        <label>2</label>
    </ligand>
</feature>
<feature type="binding site" evidence="6">
    <location>
        <position position="619"/>
    </location>
    <ligand>
        <name>Zn(2+)</name>
        <dbReference type="ChEBI" id="CHEBI:29105"/>
        <label>2</label>
    </ligand>
</feature>
<feature type="binding site" evidence="6">
    <location>
        <position position="624"/>
    </location>
    <ligand>
        <name>Zn(2+)</name>
        <dbReference type="ChEBI" id="CHEBI:29105"/>
        <label>1</label>
    </ligand>
</feature>
<feature type="binding site" evidence="2">
    <location>
        <position position="635"/>
    </location>
    <ligand>
        <name>Zn(2+)</name>
        <dbReference type="ChEBI" id="CHEBI:29105"/>
    </ligand>
</feature>
<feature type="binding site" evidence="2">
    <location>
        <position position="638"/>
    </location>
    <ligand>
        <name>Zn(2+)</name>
        <dbReference type="ChEBI" id="CHEBI:29105"/>
    </ligand>
</feature>
<feature type="binding site" evidence="2">
    <location>
        <position position="661"/>
    </location>
    <ligand>
        <name>Zn(2+)</name>
        <dbReference type="ChEBI" id="CHEBI:29105"/>
    </ligand>
</feature>
<feature type="binding site" evidence="2">
    <location>
        <position position="664"/>
    </location>
    <ligand>
        <name>Zn(2+)</name>
        <dbReference type="ChEBI" id="CHEBI:29105"/>
    </ligand>
</feature>
<feature type="binding site" evidence="2">
    <location>
        <position position="669"/>
    </location>
    <ligand>
        <name>Zn(2+)</name>
        <dbReference type="ChEBI" id="CHEBI:29105"/>
    </ligand>
</feature>
<feature type="binding site" evidence="2">
    <location>
        <position position="672"/>
    </location>
    <ligand>
        <name>Zn(2+)</name>
        <dbReference type="ChEBI" id="CHEBI:29105"/>
    </ligand>
</feature>
<feature type="binding site" evidence="2">
    <location>
        <position position="692"/>
    </location>
    <ligand>
        <name>Zn(2+)</name>
        <dbReference type="ChEBI" id="CHEBI:29105"/>
    </ligand>
</feature>
<feature type="binding site" evidence="2">
    <location>
        <position position="695"/>
    </location>
    <ligand>
        <name>Zn(2+)</name>
        <dbReference type="ChEBI" id="CHEBI:29105"/>
    </ligand>
</feature>
<feature type="modified residue" description="Phosphoserine" evidence="2">
    <location>
        <position position="26"/>
    </location>
</feature>
<feature type="modified residue" description="Phosphoserine" evidence="2">
    <location>
        <position position="447"/>
    </location>
</feature>
<feature type="modified residue" description="Phosphoserine" evidence="2">
    <location>
        <position position="450"/>
    </location>
</feature>
<feature type="modified residue" description="Phosphothreonine" evidence="2">
    <location>
        <position position="466"/>
    </location>
</feature>
<feature type="modified residue" description="Phosphoserine" evidence="2">
    <location>
        <position position="470"/>
    </location>
</feature>
<feature type="modified residue" description="Phosphoserine" evidence="2">
    <location>
        <position position="924"/>
    </location>
</feature>
<feature type="modified residue" description="Phosphoserine" evidence="2">
    <location>
        <position position="948"/>
    </location>
</feature>
<feature type="modified residue" description="Phosphoserine" evidence="2">
    <location>
        <position position="952"/>
    </location>
</feature>
<feature type="modified residue" description="Phosphoserine" evidence="2">
    <location>
        <position position="991"/>
    </location>
</feature>
<feature type="modified residue" description="Phosphoserine" evidence="2">
    <location>
        <position position="1004"/>
    </location>
</feature>
<feature type="cross-link" description="Glycyl lysine isopeptide (Lys-Gly) (interchain with G-Cter in SUMO2)" evidence="2">
    <location>
        <position position="830"/>
    </location>
</feature>
<feature type="cross-link" description="Glycyl lysine isopeptide (Lys-Gly) (interchain with G-Cter in SUMO2)" evidence="2">
    <location>
        <position position="863"/>
    </location>
</feature>
<feature type="splice variant" id="VSP_011342" description="In isoform 2." evidence="9">
    <location>
        <begin position="1"/>
        <end position="533"/>
    </location>
</feature>
<feature type="splice variant" id="VSP_019003" description="In isoform 4." evidence="10">
    <location>
        <begin position="2"/>
        <end position="1196"/>
    </location>
</feature>
<feature type="splice variant" id="VSP_011343" description="In isoform 2." evidence="9">
    <original>TLAITGVPVVSWPKKTAK</original>
    <variation>MAMSVSAEDDDYESEPDQ</variation>
    <location>
        <begin position="534"/>
        <end position="551"/>
    </location>
</feature>
<feature type="splice variant" id="VSP_017477" description="In isoform 3." evidence="10">
    <original>PVLPHTAVCLVCGEAGKEDTVEEEEGKFNL</original>
    <variation>VSAQKAQAGLMQGLPAICPALGLLCGMGEV</variation>
    <location>
        <begin position="627"/>
        <end position="656"/>
    </location>
</feature>
<feature type="splice variant" id="VSP_017478" description="In isoform 3." evidence="10">
    <location>
        <begin position="657"/>
        <end position="1309"/>
    </location>
</feature>
<feature type="sequence conflict" description="In Ref. 3; BAC98289." evidence="11" ref="3">
    <original>T</original>
    <variation>M</variation>
    <location>
        <position position="461"/>
    </location>
</feature>
<proteinExistence type="evidence at protein level"/>
<gene>
    <name type="primary">Kdm2b</name>
    <name type="synonym">Fbl10</name>
    <name type="synonym">Fbxl10</name>
    <name type="synonym">Jhdm1b</name>
    <name type="synonym">Kiaa3014</name>
</gene>
<reference key="1">
    <citation type="journal article" date="2005" name="Science">
        <title>The transcriptional landscape of the mammalian genome.</title>
        <authorList>
            <person name="Carninci P."/>
            <person name="Kasukawa T."/>
            <person name="Katayama S."/>
            <person name="Gough J."/>
            <person name="Frith M.C."/>
            <person name="Maeda N."/>
            <person name="Oyama R."/>
            <person name="Ravasi T."/>
            <person name="Lenhard B."/>
            <person name="Wells C."/>
            <person name="Kodzius R."/>
            <person name="Shimokawa K."/>
            <person name="Bajic V.B."/>
            <person name="Brenner S.E."/>
            <person name="Batalov S."/>
            <person name="Forrest A.R."/>
            <person name="Zavolan M."/>
            <person name="Davis M.J."/>
            <person name="Wilming L.G."/>
            <person name="Aidinis V."/>
            <person name="Allen J.E."/>
            <person name="Ambesi-Impiombato A."/>
            <person name="Apweiler R."/>
            <person name="Aturaliya R.N."/>
            <person name="Bailey T.L."/>
            <person name="Bansal M."/>
            <person name="Baxter L."/>
            <person name="Beisel K.W."/>
            <person name="Bersano T."/>
            <person name="Bono H."/>
            <person name="Chalk A.M."/>
            <person name="Chiu K.P."/>
            <person name="Choudhary V."/>
            <person name="Christoffels A."/>
            <person name="Clutterbuck D.R."/>
            <person name="Crowe M.L."/>
            <person name="Dalla E."/>
            <person name="Dalrymple B.P."/>
            <person name="de Bono B."/>
            <person name="Della Gatta G."/>
            <person name="di Bernardo D."/>
            <person name="Down T."/>
            <person name="Engstrom P."/>
            <person name="Fagiolini M."/>
            <person name="Faulkner G."/>
            <person name="Fletcher C.F."/>
            <person name="Fukushima T."/>
            <person name="Furuno M."/>
            <person name="Futaki S."/>
            <person name="Gariboldi M."/>
            <person name="Georgii-Hemming P."/>
            <person name="Gingeras T.R."/>
            <person name="Gojobori T."/>
            <person name="Green R.E."/>
            <person name="Gustincich S."/>
            <person name="Harbers M."/>
            <person name="Hayashi Y."/>
            <person name="Hensch T.K."/>
            <person name="Hirokawa N."/>
            <person name="Hill D."/>
            <person name="Huminiecki L."/>
            <person name="Iacono M."/>
            <person name="Ikeo K."/>
            <person name="Iwama A."/>
            <person name="Ishikawa T."/>
            <person name="Jakt M."/>
            <person name="Kanapin A."/>
            <person name="Katoh M."/>
            <person name="Kawasawa Y."/>
            <person name="Kelso J."/>
            <person name="Kitamura H."/>
            <person name="Kitano H."/>
            <person name="Kollias G."/>
            <person name="Krishnan S.P."/>
            <person name="Kruger A."/>
            <person name="Kummerfeld S.K."/>
            <person name="Kurochkin I.V."/>
            <person name="Lareau L.F."/>
            <person name="Lazarevic D."/>
            <person name="Lipovich L."/>
            <person name="Liu J."/>
            <person name="Liuni S."/>
            <person name="McWilliam S."/>
            <person name="Madan Babu M."/>
            <person name="Madera M."/>
            <person name="Marchionni L."/>
            <person name="Matsuda H."/>
            <person name="Matsuzawa S."/>
            <person name="Miki H."/>
            <person name="Mignone F."/>
            <person name="Miyake S."/>
            <person name="Morris K."/>
            <person name="Mottagui-Tabar S."/>
            <person name="Mulder N."/>
            <person name="Nakano N."/>
            <person name="Nakauchi H."/>
            <person name="Ng P."/>
            <person name="Nilsson R."/>
            <person name="Nishiguchi S."/>
            <person name="Nishikawa S."/>
            <person name="Nori F."/>
            <person name="Ohara O."/>
            <person name="Okazaki Y."/>
            <person name="Orlando V."/>
            <person name="Pang K.C."/>
            <person name="Pavan W.J."/>
            <person name="Pavesi G."/>
            <person name="Pesole G."/>
            <person name="Petrovsky N."/>
            <person name="Piazza S."/>
            <person name="Reed J."/>
            <person name="Reid J.F."/>
            <person name="Ring B.Z."/>
            <person name="Ringwald M."/>
            <person name="Rost B."/>
            <person name="Ruan Y."/>
            <person name="Salzberg S.L."/>
            <person name="Sandelin A."/>
            <person name="Schneider C."/>
            <person name="Schoenbach C."/>
            <person name="Sekiguchi K."/>
            <person name="Semple C.A."/>
            <person name="Seno S."/>
            <person name="Sessa L."/>
            <person name="Sheng Y."/>
            <person name="Shibata Y."/>
            <person name="Shimada H."/>
            <person name="Shimada K."/>
            <person name="Silva D."/>
            <person name="Sinclair B."/>
            <person name="Sperling S."/>
            <person name="Stupka E."/>
            <person name="Sugiura K."/>
            <person name="Sultana R."/>
            <person name="Takenaka Y."/>
            <person name="Taki K."/>
            <person name="Tammoja K."/>
            <person name="Tan S.L."/>
            <person name="Tang S."/>
            <person name="Taylor M.S."/>
            <person name="Tegner J."/>
            <person name="Teichmann S.A."/>
            <person name="Ueda H.R."/>
            <person name="van Nimwegen E."/>
            <person name="Verardo R."/>
            <person name="Wei C.L."/>
            <person name="Yagi K."/>
            <person name="Yamanishi H."/>
            <person name="Zabarovsky E."/>
            <person name="Zhu S."/>
            <person name="Zimmer A."/>
            <person name="Hide W."/>
            <person name="Bult C."/>
            <person name="Grimmond S.M."/>
            <person name="Teasdale R.D."/>
            <person name="Liu E.T."/>
            <person name="Brusic V."/>
            <person name="Quackenbush J."/>
            <person name="Wahlestedt C."/>
            <person name="Mattick J.S."/>
            <person name="Hume D.A."/>
            <person name="Kai C."/>
            <person name="Sasaki D."/>
            <person name="Tomaru Y."/>
            <person name="Fukuda S."/>
            <person name="Kanamori-Katayama M."/>
            <person name="Suzuki M."/>
            <person name="Aoki J."/>
            <person name="Arakawa T."/>
            <person name="Iida J."/>
            <person name="Imamura K."/>
            <person name="Itoh M."/>
            <person name="Kato T."/>
            <person name="Kawaji H."/>
            <person name="Kawagashira N."/>
            <person name="Kawashima T."/>
            <person name="Kojima M."/>
            <person name="Kondo S."/>
            <person name="Konno H."/>
            <person name="Nakano K."/>
            <person name="Ninomiya N."/>
            <person name="Nishio T."/>
            <person name="Okada M."/>
            <person name="Plessy C."/>
            <person name="Shibata K."/>
            <person name="Shiraki T."/>
            <person name="Suzuki S."/>
            <person name="Tagami M."/>
            <person name="Waki K."/>
            <person name="Watahiki A."/>
            <person name="Okamura-Oho Y."/>
            <person name="Suzuki H."/>
            <person name="Kawai J."/>
            <person name="Hayashizaki Y."/>
        </authorList>
    </citation>
    <scope>NUCLEOTIDE SEQUENCE [LARGE SCALE MRNA] (ISOFORMS 3 AND 4)</scope>
    <source>
        <strain>C57BL/6J</strain>
        <tissue>Cerebellum</tissue>
        <tissue>Embryo</tissue>
    </source>
</reference>
<reference key="2">
    <citation type="journal article" date="2004" name="Genome Res.">
        <title>The status, quality, and expansion of the NIH full-length cDNA project: the Mammalian Gene Collection (MGC).</title>
        <authorList>
            <consortium name="The MGC Project Team"/>
        </authorList>
    </citation>
    <scope>NUCLEOTIDE SEQUENCE [LARGE SCALE MRNA] (ISOFORMS 1 AND 2)</scope>
    <source>
        <strain>C57BL/6J</strain>
        <tissue>Brain</tissue>
    </source>
</reference>
<reference key="3">
    <citation type="journal article" date="2003" name="DNA Res.">
        <title>Prediction of the coding sequences of mouse homologues of KIAA gene: III. The complete nucleotide sequences of 500 mouse KIAA-homologous cDNAs identified by screening of terminal sequences of cDNA clones randomly sampled from size-fractionated libraries.</title>
        <authorList>
            <person name="Okazaki N."/>
            <person name="Kikuno R."/>
            <person name="Ohara R."/>
            <person name="Inamoto S."/>
            <person name="Koseki H."/>
            <person name="Hiraoka S."/>
            <person name="Saga Y."/>
            <person name="Nagase T."/>
            <person name="Ohara O."/>
            <person name="Koga H."/>
        </authorList>
    </citation>
    <scope>NUCLEOTIDE SEQUENCE [LARGE SCALE MRNA] OF 6-1309 (ISOFORM 1)</scope>
    <source>
        <tissue>Brain</tissue>
    </source>
</reference>
<reference key="4">
    <citation type="journal article" date="1999" name="Curr. Biol.">
        <title>A family of mammalian F-box proteins.</title>
        <authorList>
            <person name="Winston J.T."/>
            <person name="Koepp D.M."/>
            <person name="Zhu C."/>
            <person name="Elledge S.J."/>
            <person name="Harper J.W."/>
        </authorList>
    </citation>
    <scope>NUCLEOTIDE SEQUENCE [MRNA] OF 1011-1309 (ISOFORMS 1/2)</scope>
</reference>
<reference key="5">
    <citation type="journal article" date="2010" name="Cell">
        <title>A tissue-specific atlas of mouse protein phosphorylation and expression.</title>
        <authorList>
            <person name="Huttlin E.L."/>
            <person name="Jedrychowski M.P."/>
            <person name="Elias J.E."/>
            <person name="Goswami T."/>
            <person name="Rad R."/>
            <person name="Beausoleil S.A."/>
            <person name="Villen J."/>
            <person name="Haas W."/>
            <person name="Sowa M.E."/>
            <person name="Gygi S.P."/>
        </authorList>
    </citation>
    <scope>IDENTIFICATION BY MASS SPECTROMETRY [LARGE SCALE ANALYSIS]</scope>
    <source>
        <tissue>Spleen</tissue>
        <tissue>Testis</tissue>
    </source>
</reference>
<name>KDM2B_MOUSE</name>
<accession>Q6P1G2</accession>
<accession>Q3V396</accession>
<accession>Q6PFD0</accession>
<accession>Q6ZPE8</accession>
<accession>Q9CSF7</accession>
<accession>Q9QZN6</accession>
<organism>
    <name type="scientific">Mus musculus</name>
    <name type="common">Mouse</name>
    <dbReference type="NCBI Taxonomy" id="10090"/>
    <lineage>
        <taxon>Eukaryota</taxon>
        <taxon>Metazoa</taxon>
        <taxon>Chordata</taxon>
        <taxon>Craniata</taxon>
        <taxon>Vertebrata</taxon>
        <taxon>Euteleostomi</taxon>
        <taxon>Mammalia</taxon>
        <taxon>Eutheria</taxon>
        <taxon>Euarchontoglires</taxon>
        <taxon>Glires</taxon>
        <taxon>Rodentia</taxon>
        <taxon>Myomorpha</taxon>
        <taxon>Muroidea</taxon>
        <taxon>Muridae</taxon>
        <taxon>Murinae</taxon>
        <taxon>Mus</taxon>
        <taxon>Mus</taxon>
    </lineage>
</organism>
<sequence length="1309" mass="149733">MEAEKDSGRRLRAIDRQRYDENEDLSDVEEIVSVRGFSLEEKLRSQLYQGDFVHAMEGKDFNYEYVQREALRVPLVFRDKDGLGIKMPDPDFTVRDVKLLVGSRRLVDVMDVNTQKGTEMSMSQFVRYYETPEAQRDKLYNVISLEFSHTKLEHLVKRPTVVDLVDWVDNMWPQHLKEKQTEATNALAEMKYPKVKKYCLMSVKGCFTDFHIDFGGTSVWYHVFRGGKIFWLIPPTLHNLALYEEWVLSGKQSDIFLGDRVERCQRIELKQGYTFFIPSGWIHAVYTPVDSLVFGGNILHSFNVPMQLRIYEIEDRTRVQPKFRYPFYYEMCWYVLERYVYCVTQRSYLTQEYQRELMLIDAPRKTSVDGFSSDSWLDMEEESCEQQPQEEEEEEEDKEEEGDGADKTPKPPTDDPTSPTSTPPEDQDSTGKKPKAPAIRFLKRTLSNESEESVKSTSMPTDDPKTPTGSPATEVSTKWTHLTEFELKGLKALVEKLESLPENKKCVPEGIEDPQALLEGVKNVLKEHVDDDPTLAITGVPVVSWPKKTAKNRVVGRPKGKLGPASAVKLAANRTTAGARRRRTRCRKCEACLRTECGECHFCKDMKKFGGPGRMKQSCIMRQCIAPVLPHTAVCLVCGEAGKEDTVEEEEGKFNLMLMECSICNEIIHPGCLKIKESEGVVNDELPNCWECPKCNHAGKTGKQKRGPGFKYASNLPGSLLKEQKMNRDNKEGQEPAKRRSECEEAPRRRSDEHPKKVPADGILRRKSDDVHLRRKRKYEKPQELSGRKRASSLQTSPGSSSHLSPRPPLGSSLSPWWRSSLTYFQQQLKPGKEDKLFRKKRRSWKNAEDRLSLANKPLRRFKQEPEDDLPEAPPKTRESDQSRSSSPTAGPSTEGAEGPEEKKKVKMRRKRRLVNKELSKELSKELNHEIQKTESTLAHESQQPIKSEPESENDEPKRPLSHCERPHRFSKGLNGTPRELRHSLGPGLRSPPRVMSRPPPSASPPKCIQMERHVIRPPPISPPPDSLPLDDGAAHVMHREVWMAVFSYLSHRDLCVCMRVCRTWNRWCCDKRLWTRIDLNRCKSITPLMLSGIIRRQPVSLDLSWTNISKKQLSWLINRLPGLRDLVLSGCSWIAVSALCSSSCPLLRTLDVQWVEGLKDAQMRDLLSPPTDNRPGQMDNRSKLRNIVELRLAGLDITDVSLRLIIRHMPLLSKLQLSYCNHINDQSINLLTAVGTTTRDSLTEVNLSDCNKVTDLCLSFFKRCGNICHIDLRYCKQVTKEGCEQFIAEMSVSVQFGQVEEKLLQKLS</sequence>
<dbReference type="EC" id="1.14.11.27" evidence="2"/>
<dbReference type="EMBL" id="AK012952">
    <property type="protein sequence ID" value="BAB28568.2"/>
    <property type="molecule type" value="mRNA"/>
</dbReference>
<dbReference type="EMBL" id="AK043352">
    <property type="protein sequence ID" value="BAE20639.1"/>
    <property type="molecule type" value="mRNA"/>
</dbReference>
<dbReference type="EMBL" id="BC057622">
    <property type="protein sequence ID" value="AAH57622.1"/>
    <property type="molecule type" value="mRNA"/>
</dbReference>
<dbReference type="EMBL" id="BC065090">
    <property type="protein sequence ID" value="AAH65090.1"/>
    <property type="molecule type" value="mRNA"/>
</dbReference>
<dbReference type="EMBL" id="AK129479">
    <property type="protein sequence ID" value="BAC98289.1"/>
    <property type="molecule type" value="mRNA"/>
</dbReference>
<dbReference type="EMBL" id="AF176524">
    <property type="protein sequence ID" value="AAF09133.1"/>
    <property type="molecule type" value="mRNA"/>
</dbReference>
<dbReference type="CCDS" id="CCDS19657.1">
    <molecule id="Q6P1G2-2"/>
</dbReference>
<dbReference type="CCDS" id="CCDS39259.1">
    <molecule id="Q6P1G2-1"/>
</dbReference>
<dbReference type="RefSeq" id="NP_001003953.1">
    <molecule id="Q6P1G2-1"/>
    <property type="nucleotide sequence ID" value="NM_001003953.2"/>
</dbReference>
<dbReference type="RefSeq" id="NP_038938.1">
    <molecule id="Q6P1G2-2"/>
    <property type="nucleotide sequence ID" value="NM_013910.2"/>
</dbReference>
<dbReference type="SMR" id="Q6P1G2"/>
<dbReference type="BioGRID" id="205978">
    <property type="interactions" value="21"/>
</dbReference>
<dbReference type="DIP" id="DIP-46351N"/>
<dbReference type="FunCoup" id="Q6P1G2">
    <property type="interactions" value="4423"/>
</dbReference>
<dbReference type="IntAct" id="Q6P1G2">
    <property type="interactions" value="11"/>
</dbReference>
<dbReference type="STRING" id="10090.ENSMUSP00000038229"/>
<dbReference type="GlyGen" id="Q6P1G2">
    <property type="glycosylation" value="1 site"/>
</dbReference>
<dbReference type="iPTMnet" id="Q6P1G2"/>
<dbReference type="PhosphoSitePlus" id="Q6P1G2"/>
<dbReference type="jPOST" id="Q6P1G2"/>
<dbReference type="PaxDb" id="10090-ENSMUSP00000038229"/>
<dbReference type="PeptideAtlas" id="Q6P1G2"/>
<dbReference type="ProteomicsDB" id="263518">
    <molecule id="Q6P1G2-1"/>
</dbReference>
<dbReference type="ProteomicsDB" id="263519">
    <molecule id="Q6P1G2-2"/>
</dbReference>
<dbReference type="ProteomicsDB" id="263520">
    <molecule id="Q6P1G2-3"/>
</dbReference>
<dbReference type="ProteomicsDB" id="263521">
    <molecule id="Q6P1G2-4"/>
</dbReference>
<dbReference type="Pumba" id="Q6P1G2"/>
<dbReference type="Antibodypedia" id="31579">
    <property type="antibodies" value="314 antibodies from 29 providers"/>
</dbReference>
<dbReference type="DNASU" id="30841"/>
<dbReference type="Ensembl" id="ENSMUST00000031435.14">
    <molecule id="Q6P1G2-2"/>
    <property type="protein sequence ID" value="ENSMUSP00000031435.8"/>
    <property type="gene ID" value="ENSMUSG00000029475.18"/>
</dbReference>
<dbReference type="Ensembl" id="ENSMUST00000046073.16">
    <molecule id="Q6P1G2-1"/>
    <property type="protein sequence ID" value="ENSMUSP00000038229.10"/>
    <property type="gene ID" value="ENSMUSG00000029475.18"/>
</dbReference>
<dbReference type="GeneID" id="30841"/>
<dbReference type="KEGG" id="mmu:30841"/>
<dbReference type="UCSC" id="uc008zmq.2">
    <molecule id="Q6P1G2-2"/>
    <property type="organism name" value="mouse"/>
</dbReference>
<dbReference type="UCSC" id="uc008zms.3">
    <molecule id="Q6P1G2-1"/>
    <property type="organism name" value="mouse"/>
</dbReference>
<dbReference type="UCSC" id="uc008zmu.2">
    <molecule id="Q6P1G2-3"/>
    <property type="organism name" value="mouse"/>
</dbReference>
<dbReference type="AGR" id="MGI:1354737"/>
<dbReference type="CTD" id="84678"/>
<dbReference type="MGI" id="MGI:1354737">
    <property type="gene designation" value="Kdm2b"/>
</dbReference>
<dbReference type="VEuPathDB" id="HostDB:ENSMUSG00000029475"/>
<dbReference type="eggNOG" id="KOG1633">
    <property type="taxonomic scope" value="Eukaryota"/>
</dbReference>
<dbReference type="eggNOG" id="KOG1947">
    <property type="taxonomic scope" value="Eukaryota"/>
</dbReference>
<dbReference type="GeneTree" id="ENSGT00940000154717"/>
<dbReference type="HOGENOM" id="CLU_003540_0_2_1"/>
<dbReference type="InParanoid" id="Q6P1G2"/>
<dbReference type="OMA" id="HTHLTHY"/>
<dbReference type="OrthoDB" id="5876800at2759"/>
<dbReference type="PhylomeDB" id="Q6P1G2"/>
<dbReference type="TreeFam" id="TF106480"/>
<dbReference type="BRENDA" id="1.14.11.27">
    <property type="organism ID" value="3474"/>
</dbReference>
<dbReference type="Reactome" id="R-MMU-3214842">
    <property type="pathway name" value="HDMs demethylate histones"/>
</dbReference>
<dbReference type="BioGRID-ORCS" id="30841">
    <property type="hits" value="2 hits in 86 CRISPR screens"/>
</dbReference>
<dbReference type="ChiTaRS" id="Kdm2b">
    <property type="organism name" value="mouse"/>
</dbReference>
<dbReference type="PRO" id="PR:Q6P1G2"/>
<dbReference type="Proteomes" id="UP000000589">
    <property type="component" value="Chromosome 5"/>
</dbReference>
<dbReference type="RNAct" id="Q6P1G2">
    <property type="molecule type" value="protein"/>
</dbReference>
<dbReference type="Bgee" id="ENSMUSG00000029475">
    <property type="expression patterns" value="Expressed in animal zygote and 70 other cell types or tissues"/>
</dbReference>
<dbReference type="ExpressionAtlas" id="Q6P1G2">
    <property type="expression patterns" value="baseline and differential"/>
</dbReference>
<dbReference type="GO" id="GO:0005694">
    <property type="term" value="C:chromosome"/>
    <property type="evidence" value="ECO:0007669"/>
    <property type="project" value="UniProtKB-SubCell"/>
</dbReference>
<dbReference type="GO" id="GO:0005730">
    <property type="term" value="C:nucleolus"/>
    <property type="evidence" value="ECO:0007669"/>
    <property type="project" value="UniProtKB-SubCell"/>
</dbReference>
<dbReference type="GO" id="GO:0005654">
    <property type="term" value="C:nucleoplasm"/>
    <property type="evidence" value="ECO:0007669"/>
    <property type="project" value="Ensembl"/>
</dbReference>
<dbReference type="GO" id="GO:0005634">
    <property type="term" value="C:nucleus"/>
    <property type="evidence" value="ECO:0000250"/>
    <property type="project" value="UniProtKB"/>
</dbReference>
<dbReference type="GO" id="GO:0031519">
    <property type="term" value="C:PcG protein complex"/>
    <property type="evidence" value="ECO:0007669"/>
    <property type="project" value="Ensembl"/>
</dbReference>
<dbReference type="GO" id="GO:0032452">
    <property type="term" value="F:histone demethylase activity"/>
    <property type="evidence" value="ECO:0000304"/>
    <property type="project" value="BHF-UCL"/>
</dbReference>
<dbReference type="GO" id="GO:0051864">
    <property type="term" value="F:histone H3K36 demethylase activity"/>
    <property type="evidence" value="ECO:0000314"/>
    <property type="project" value="MGI"/>
</dbReference>
<dbReference type="GO" id="GO:0140680">
    <property type="term" value="F:histone H3K36me/H3K36me2 demethylase activity"/>
    <property type="evidence" value="ECO:0007669"/>
    <property type="project" value="UniProtKB-EC"/>
</dbReference>
<dbReference type="GO" id="GO:0000978">
    <property type="term" value="F:RNA polymerase II cis-regulatory region sequence-specific DNA binding"/>
    <property type="evidence" value="ECO:0000314"/>
    <property type="project" value="MGI"/>
</dbReference>
<dbReference type="GO" id="GO:0019843">
    <property type="term" value="F:rRNA binding"/>
    <property type="evidence" value="ECO:0007669"/>
    <property type="project" value="UniProtKB-KW"/>
</dbReference>
<dbReference type="GO" id="GO:0045322">
    <property type="term" value="F:unmethylated CpG binding"/>
    <property type="evidence" value="ECO:0000250"/>
    <property type="project" value="UniProtKB"/>
</dbReference>
<dbReference type="GO" id="GO:0008270">
    <property type="term" value="F:zinc ion binding"/>
    <property type="evidence" value="ECO:0000250"/>
    <property type="project" value="UniProtKB"/>
</dbReference>
<dbReference type="GO" id="GO:0048596">
    <property type="term" value="P:embryonic camera-type eye morphogenesis"/>
    <property type="evidence" value="ECO:0000315"/>
    <property type="project" value="BHF-UCL"/>
</dbReference>
<dbReference type="GO" id="GO:0030900">
    <property type="term" value="P:forebrain development"/>
    <property type="evidence" value="ECO:0000315"/>
    <property type="project" value="BHF-UCL"/>
</dbReference>
<dbReference type="GO" id="GO:0021592">
    <property type="term" value="P:fourth ventricle development"/>
    <property type="evidence" value="ECO:0000315"/>
    <property type="project" value="BHF-UCL"/>
</dbReference>
<dbReference type="GO" id="GO:0030902">
    <property type="term" value="P:hindbrain development"/>
    <property type="evidence" value="ECO:0000315"/>
    <property type="project" value="BHF-UCL"/>
</dbReference>
<dbReference type="GO" id="GO:0021993">
    <property type="term" value="P:initiation of neural tube closure"/>
    <property type="evidence" value="ECO:0000315"/>
    <property type="project" value="BHF-UCL"/>
</dbReference>
<dbReference type="GO" id="GO:0021670">
    <property type="term" value="P:lateral ventricle development"/>
    <property type="evidence" value="ECO:0000315"/>
    <property type="project" value="BHF-UCL"/>
</dbReference>
<dbReference type="GO" id="GO:0030901">
    <property type="term" value="P:midbrain development"/>
    <property type="evidence" value="ECO:0000315"/>
    <property type="project" value="BHF-UCL"/>
</dbReference>
<dbReference type="GO" id="GO:0021555">
    <property type="term" value="P:midbrain-hindbrain boundary morphogenesis"/>
    <property type="evidence" value="ECO:0000315"/>
    <property type="project" value="BHF-UCL"/>
</dbReference>
<dbReference type="GO" id="GO:2000178">
    <property type="term" value="P:negative regulation of neural precursor cell proliferation"/>
    <property type="evidence" value="ECO:0000315"/>
    <property type="project" value="BHF-UCL"/>
</dbReference>
<dbReference type="GO" id="GO:0043524">
    <property type="term" value="P:negative regulation of neuron apoptotic process"/>
    <property type="evidence" value="ECO:0000315"/>
    <property type="project" value="BHF-UCL"/>
</dbReference>
<dbReference type="GO" id="GO:0000122">
    <property type="term" value="P:negative regulation of transcription by RNA polymerase II"/>
    <property type="evidence" value="ECO:0000314"/>
    <property type="project" value="MGI"/>
</dbReference>
<dbReference type="GO" id="GO:0030307">
    <property type="term" value="P:positive regulation of cell growth"/>
    <property type="evidence" value="ECO:0000314"/>
    <property type="project" value="MGI"/>
</dbReference>
<dbReference type="GO" id="GO:1902459">
    <property type="term" value="P:positive regulation of stem cell population maintenance"/>
    <property type="evidence" value="ECO:0000314"/>
    <property type="project" value="MGI"/>
</dbReference>
<dbReference type="GO" id="GO:0007283">
    <property type="term" value="P:spermatogenesis"/>
    <property type="evidence" value="ECO:0000315"/>
    <property type="project" value="BHF-UCL"/>
</dbReference>
<dbReference type="GO" id="GO:0021678">
    <property type="term" value="P:third ventricle development"/>
    <property type="evidence" value="ECO:0000315"/>
    <property type="project" value="BHF-UCL"/>
</dbReference>
<dbReference type="CDD" id="cd21785">
    <property type="entry name" value="CTD_KDM2B"/>
    <property type="match status" value="1"/>
</dbReference>
<dbReference type="CDD" id="cd22180">
    <property type="entry name" value="F-box_FBXL10"/>
    <property type="match status" value="1"/>
</dbReference>
<dbReference type="CDD" id="cd15644">
    <property type="entry name" value="PHD_KDM2B"/>
    <property type="match status" value="1"/>
</dbReference>
<dbReference type="FunFam" id="1.20.1280.50:FF:000083">
    <property type="entry name" value="Lysine (K)-specific demethylase 2B"/>
    <property type="match status" value="1"/>
</dbReference>
<dbReference type="FunFam" id="1.20.58.1360:FF:000002">
    <property type="entry name" value="Lysine (K)-specific demethylase 2B"/>
    <property type="match status" value="1"/>
</dbReference>
<dbReference type="FunFam" id="2.60.120.650:FF:000005">
    <property type="entry name" value="lysine-specific demethylase 2A isoform X1"/>
    <property type="match status" value="1"/>
</dbReference>
<dbReference type="FunFam" id="3.80.10.10:FF:000011">
    <property type="entry name" value="Lysine-specific demethylase 2B isoform X1"/>
    <property type="match status" value="1"/>
</dbReference>
<dbReference type="FunFam" id="3.30.40.10:FF:000020">
    <property type="entry name" value="lysine-specific demethylase 2B isoform X1"/>
    <property type="match status" value="1"/>
</dbReference>
<dbReference type="Gene3D" id="1.20.58.1360">
    <property type="match status" value="1"/>
</dbReference>
<dbReference type="Gene3D" id="2.60.120.650">
    <property type="entry name" value="Cupin"/>
    <property type="match status" value="1"/>
</dbReference>
<dbReference type="Gene3D" id="3.80.10.10">
    <property type="entry name" value="Ribonuclease Inhibitor"/>
    <property type="match status" value="1"/>
</dbReference>
<dbReference type="Gene3D" id="3.30.40.10">
    <property type="entry name" value="Zinc/RING finger domain, C3HC4 (zinc finger)"/>
    <property type="match status" value="1"/>
</dbReference>
<dbReference type="InterPro" id="IPR041667">
    <property type="entry name" value="Cupin_8"/>
</dbReference>
<dbReference type="InterPro" id="IPR001810">
    <property type="entry name" value="F-box_dom"/>
</dbReference>
<dbReference type="InterPro" id="IPR041070">
    <property type="entry name" value="JHD"/>
</dbReference>
<dbReference type="InterPro" id="IPR050690">
    <property type="entry name" value="JHDM1_Histone_Demethylase"/>
</dbReference>
<dbReference type="InterPro" id="IPR003347">
    <property type="entry name" value="JmjC_dom"/>
</dbReference>
<dbReference type="InterPro" id="IPR006553">
    <property type="entry name" value="Leu-rich_rpt_Cys-con_subtyp"/>
</dbReference>
<dbReference type="InterPro" id="IPR032675">
    <property type="entry name" value="LRR_dom_sf"/>
</dbReference>
<dbReference type="InterPro" id="IPR002857">
    <property type="entry name" value="Znf_CXXC"/>
</dbReference>
<dbReference type="InterPro" id="IPR011011">
    <property type="entry name" value="Znf_FYVE_PHD"/>
</dbReference>
<dbReference type="InterPro" id="IPR001965">
    <property type="entry name" value="Znf_PHD"/>
</dbReference>
<dbReference type="InterPro" id="IPR019787">
    <property type="entry name" value="Znf_PHD-finger"/>
</dbReference>
<dbReference type="InterPro" id="IPR013083">
    <property type="entry name" value="Znf_RING/FYVE/PHD"/>
</dbReference>
<dbReference type="PANTHER" id="PTHR23123">
    <property type="entry name" value="PHD/F-BOX CONTAINING PROTEIN"/>
    <property type="match status" value="1"/>
</dbReference>
<dbReference type="Pfam" id="PF13621">
    <property type="entry name" value="Cupin_8"/>
    <property type="match status" value="1"/>
</dbReference>
<dbReference type="Pfam" id="PF12937">
    <property type="entry name" value="F-box-like"/>
    <property type="match status" value="1"/>
</dbReference>
<dbReference type="Pfam" id="PF17811">
    <property type="entry name" value="JHD"/>
    <property type="match status" value="1"/>
</dbReference>
<dbReference type="Pfam" id="PF16866">
    <property type="entry name" value="PHD_4"/>
    <property type="match status" value="1"/>
</dbReference>
<dbReference type="Pfam" id="PF02008">
    <property type="entry name" value="zf-CXXC"/>
    <property type="match status" value="1"/>
</dbReference>
<dbReference type="SMART" id="SM00558">
    <property type="entry name" value="JmjC"/>
    <property type="match status" value="1"/>
</dbReference>
<dbReference type="SMART" id="SM00367">
    <property type="entry name" value="LRR_CC"/>
    <property type="match status" value="5"/>
</dbReference>
<dbReference type="SMART" id="SM00249">
    <property type="entry name" value="PHD"/>
    <property type="match status" value="1"/>
</dbReference>
<dbReference type="SUPFAM" id="SSF51197">
    <property type="entry name" value="Clavaminate synthase-like"/>
    <property type="match status" value="1"/>
</dbReference>
<dbReference type="SUPFAM" id="SSF57903">
    <property type="entry name" value="FYVE/PHD zinc finger"/>
    <property type="match status" value="1"/>
</dbReference>
<dbReference type="SUPFAM" id="SSF52047">
    <property type="entry name" value="RNI-like"/>
    <property type="match status" value="1"/>
</dbReference>
<dbReference type="PROSITE" id="PS51184">
    <property type="entry name" value="JMJC"/>
    <property type="match status" value="1"/>
</dbReference>
<dbReference type="PROSITE" id="PS51058">
    <property type="entry name" value="ZF_CXXC"/>
    <property type="match status" value="1"/>
</dbReference>
<dbReference type="PROSITE" id="PS50016">
    <property type="entry name" value="ZF_PHD_2"/>
    <property type="match status" value="1"/>
</dbReference>
<evidence type="ECO:0000250" key="1"/>
<evidence type="ECO:0000250" key="2">
    <source>
        <dbReference type="UniProtKB" id="Q8NHM5"/>
    </source>
</evidence>
<evidence type="ECO:0000250" key="3">
    <source>
        <dbReference type="UniProtKB" id="Q9Y2K7"/>
    </source>
</evidence>
<evidence type="ECO:0000255" key="4"/>
<evidence type="ECO:0000255" key="5">
    <source>
        <dbReference type="PROSITE-ProRule" id="PRU00146"/>
    </source>
</evidence>
<evidence type="ECO:0000255" key="6">
    <source>
        <dbReference type="PROSITE-ProRule" id="PRU00509"/>
    </source>
</evidence>
<evidence type="ECO:0000255" key="7">
    <source>
        <dbReference type="PROSITE-ProRule" id="PRU00538"/>
    </source>
</evidence>
<evidence type="ECO:0000256" key="8">
    <source>
        <dbReference type="SAM" id="MobiDB-lite"/>
    </source>
</evidence>
<evidence type="ECO:0000303" key="9">
    <source>
    </source>
</evidence>
<evidence type="ECO:0000303" key="10">
    <source>
    </source>
</evidence>
<evidence type="ECO:0000305" key="11"/>
<comment type="function">
    <text evidence="2">Histone demethylase that demethylates 'Lys-4' and 'Lys-36' of histone H3, thereby playing a central role in histone code. Preferentially demethylates trimethylated H3 'Lys-4' and dimethylated H3 'Lys-36' residue while it has weak or no activity for mono- and tri-methylated H3 'Lys-36'. Preferentially binds the transcribed region of ribosomal RNA and represses the transcription of ribosomal RNA genes which inhibits cell growth and proliferation (By similarity). May also serve as a substrate-recognition component of the SCF (SKP1-CUL1-F-box protein)-type E3 ubiquitin ligase complex (By similarity).</text>
</comment>
<comment type="catalytic activity">
    <reaction evidence="2">
        <text>N(6),N(6)-dimethyl-L-lysyl(36)-[histone H3] + 2 2-oxoglutarate + 2 O2 = L-lysyl(36)-[histone H3] + 2 formaldehyde + 2 succinate + 2 CO2</text>
        <dbReference type="Rhea" id="RHEA:42032"/>
        <dbReference type="Rhea" id="RHEA-COMP:9785"/>
        <dbReference type="Rhea" id="RHEA-COMP:9787"/>
        <dbReference type="ChEBI" id="CHEBI:15379"/>
        <dbReference type="ChEBI" id="CHEBI:16526"/>
        <dbReference type="ChEBI" id="CHEBI:16810"/>
        <dbReference type="ChEBI" id="CHEBI:16842"/>
        <dbReference type="ChEBI" id="CHEBI:29969"/>
        <dbReference type="ChEBI" id="CHEBI:30031"/>
        <dbReference type="ChEBI" id="CHEBI:61976"/>
        <dbReference type="EC" id="1.14.11.27"/>
    </reaction>
</comment>
<comment type="cofactor">
    <cofactor evidence="2">
        <name>Fe(2+)</name>
        <dbReference type="ChEBI" id="CHEBI:29033"/>
    </cofactor>
    <text evidence="3">Binds 1 Fe(2+) ion per subunit.</text>
</comment>
<comment type="activity regulation">
    <text evidence="2">Histone demethylase activity is inhibited by fumarate.</text>
</comment>
<comment type="subunit">
    <text evidence="2 11">Interacts with SKP1, forming heterodimers (By similarity). The KDM2B-SKP1 heterodimeric complex interacts with the PCGF1-BCORL heterodimeric complex to form a homotetrameric polycomb repression complex 1 (PRC1.1) (By similarity). Directly interacts with CUL1. The SKP1-KDM2B interacts with UBB (By similarity).</text>
</comment>
<comment type="interaction">
    <interactant intactId="EBI-1216214">
        <id>Q6P1G2</id>
    </interactant>
    <interactant intactId="EBI-927321">
        <id>Q9CQJ4</id>
        <label>Rnf2</label>
    </interactant>
    <organismsDiffer>false</organismsDiffer>
    <experiments>4</experiments>
</comment>
<comment type="subcellular location">
    <subcellularLocation>
        <location evidence="2">Nucleus</location>
        <location evidence="2">Nucleolus</location>
    </subcellularLocation>
    <subcellularLocation>
        <location evidence="2">Nucleus</location>
    </subcellularLocation>
    <subcellularLocation>
        <location evidence="2">Chromosome</location>
    </subcellularLocation>
</comment>
<comment type="alternative products">
    <event type="alternative splicing"/>
    <isoform>
        <id>Q6P1G2-1</id>
        <name>1</name>
        <sequence type="displayed"/>
    </isoform>
    <isoform>
        <id>Q6P1G2-2</id>
        <name>2</name>
        <sequence type="described" ref="VSP_011342 VSP_011343"/>
    </isoform>
    <isoform>
        <id>Q6P1G2-3</id>
        <name>3</name>
        <sequence type="described" ref="VSP_017477 VSP_017478"/>
    </isoform>
    <isoform>
        <id>Q6P1G2-4</id>
        <name>4</name>
        <sequence type="described" ref="VSP_019003"/>
    </isoform>
</comment>
<comment type="domain">
    <text evidence="2">The LRR repeats are required for the interaction with the PCGF1-BCORL1 heterodimeric complex.</text>
</comment>
<comment type="domain">
    <text evidence="2">The JmjC domain mediates demethylation activity (By similarity). It is also required for repression of ribosomal RNA genes (By similarity).</text>
</comment>
<comment type="domain">
    <text evidence="2">The CXXC zinc finger mediates binding to DNA containing unmethylated cytidine-phosphate-guanosine (CpG) dinucleotides.</text>
</comment>
<comment type="domain">
    <text evidence="2">The F-box domain mediates interaction with UBB.</text>
</comment>
<comment type="similarity">
    <text evidence="11">Belongs to the JHDM1 histone demethylase family.</text>
</comment>